<proteinExistence type="inferred from homology"/>
<evidence type="ECO:0000250" key="1"/>
<evidence type="ECO:0000250" key="2">
    <source>
        <dbReference type="UniProtKB" id="P80035"/>
    </source>
</evidence>
<evidence type="ECO:0000255" key="3"/>
<evidence type="ECO:0000269" key="4">
    <source>
    </source>
</evidence>
<evidence type="ECO:0000305" key="5"/>
<evidence type="ECO:0000312" key="6">
    <source>
        <dbReference type="EMBL" id="CAA16863.1"/>
    </source>
</evidence>
<comment type="function">
    <text evidence="1">Probable lipase.</text>
</comment>
<comment type="subcellular location">
    <subcellularLocation>
        <location evidence="4">Cytoplasm</location>
    </subcellularLocation>
    <subcellularLocation>
        <location evidence="4">Vacuole</location>
    </subcellularLocation>
    <subcellularLocation>
        <location evidence="3">Membrane</location>
        <topology evidence="5">Single-pass type II membrane protein</topology>
    </subcellularLocation>
</comment>
<comment type="similarity">
    <text evidence="5">Belongs to the AB hydrolase superfamily. Lipase family.</text>
</comment>
<name>TGCE2_SCHPO</name>
<dbReference type="EC" id="3.1.1.-"/>
<dbReference type="EMBL" id="CU329671">
    <property type="protein sequence ID" value="CAA16863.1"/>
    <property type="molecule type" value="Genomic_DNA"/>
</dbReference>
<dbReference type="PIR" id="T39540">
    <property type="entry name" value="T39540"/>
</dbReference>
<dbReference type="PIR" id="T43170">
    <property type="entry name" value="T43170"/>
</dbReference>
<dbReference type="RefSeq" id="NP_596777.1">
    <property type="nucleotide sequence ID" value="NM_001023798.2"/>
</dbReference>
<dbReference type="SMR" id="P78898"/>
<dbReference type="BioGRID" id="276421">
    <property type="interactions" value="6"/>
</dbReference>
<dbReference type="FunCoup" id="P78898">
    <property type="interactions" value="34"/>
</dbReference>
<dbReference type="STRING" id="284812.P78898"/>
<dbReference type="ESTHER" id="schpo-SPBC16A3.12C">
    <property type="family name" value="Acidic_Lipase"/>
</dbReference>
<dbReference type="iPTMnet" id="P78898"/>
<dbReference type="PaxDb" id="4896-SPBC16A3.12c.1"/>
<dbReference type="EnsemblFungi" id="SPBC16A3.12c.1">
    <property type="protein sequence ID" value="SPBC16A3.12c.1:pep"/>
    <property type="gene ID" value="SPBC16A3.12c"/>
</dbReference>
<dbReference type="KEGG" id="spo:2539875"/>
<dbReference type="PomBase" id="SPBC16A3.12c"/>
<dbReference type="VEuPathDB" id="FungiDB:SPBC16A3.12c"/>
<dbReference type="eggNOG" id="KOG2624">
    <property type="taxonomic scope" value="Eukaryota"/>
</dbReference>
<dbReference type="HOGENOM" id="CLU_010974_5_0_1"/>
<dbReference type="InParanoid" id="P78898"/>
<dbReference type="OMA" id="WSRRNLY"/>
<dbReference type="PhylomeDB" id="P78898"/>
<dbReference type="Reactome" id="R-SPO-192456">
    <property type="pathway name" value="Digestion of dietary lipid"/>
</dbReference>
<dbReference type="Reactome" id="R-SPO-6809371">
    <property type="pathway name" value="Formation of the cornified envelope"/>
</dbReference>
<dbReference type="PRO" id="PR:P78898"/>
<dbReference type="Proteomes" id="UP000002485">
    <property type="component" value="Chromosome II"/>
</dbReference>
<dbReference type="GO" id="GO:0005737">
    <property type="term" value="C:cytoplasm"/>
    <property type="evidence" value="ECO:0007005"/>
    <property type="project" value="PomBase"/>
</dbReference>
<dbReference type="GO" id="GO:0000324">
    <property type="term" value="C:fungal-type vacuole"/>
    <property type="evidence" value="ECO:0007005"/>
    <property type="project" value="PomBase"/>
</dbReference>
<dbReference type="GO" id="GO:0016020">
    <property type="term" value="C:membrane"/>
    <property type="evidence" value="ECO:0007669"/>
    <property type="project" value="UniProtKB-SubCell"/>
</dbReference>
<dbReference type="GO" id="GO:0004771">
    <property type="term" value="F:sterol ester esterase activity"/>
    <property type="evidence" value="ECO:0000318"/>
    <property type="project" value="GO_Central"/>
</dbReference>
<dbReference type="GO" id="GO:0008204">
    <property type="term" value="P:ergosterol metabolic process"/>
    <property type="evidence" value="ECO:0000266"/>
    <property type="project" value="PomBase"/>
</dbReference>
<dbReference type="GO" id="GO:0016042">
    <property type="term" value="P:lipid catabolic process"/>
    <property type="evidence" value="ECO:0007669"/>
    <property type="project" value="UniProtKB-KW"/>
</dbReference>
<dbReference type="GO" id="GO:0016125">
    <property type="term" value="P:sterol metabolic process"/>
    <property type="evidence" value="ECO:0000318"/>
    <property type="project" value="GO_Central"/>
</dbReference>
<dbReference type="FunFam" id="3.40.50.1820:FF:000095">
    <property type="entry name" value="Triglyceride lipase-cholesterol esterase"/>
    <property type="match status" value="1"/>
</dbReference>
<dbReference type="Gene3D" id="3.40.50.1820">
    <property type="entry name" value="alpha/beta hydrolase"/>
    <property type="match status" value="1"/>
</dbReference>
<dbReference type="InterPro" id="IPR029058">
    <property type="entry name" value="AB_hydrolase_fold"/>
</dbReference>
<dbReference type="InterPro" id="IPR006693">
    <property type="entry name" value="AB_hydrolase_lipase"/>
</dbReference>
<dbReference type="InterPro" id="IPR025483">
    <property type="entry name" value="Lipase_euk"/>
</dbReference>
<dbReference type="PANTHER" id="PTHR11005">
    <property type="entry name" value="LYSOSOMAL ACID LIPASE-RELATED"/>
    <property type="match status" value="1"/>
</dbReference>
<dbReference type="Pfam" id="PF04083">
    <property type="entry name" value="Abhydro_lipase"/>
    <property type="match status" value="1"/>
</dbReference>
<dbReference type="PIRSF" id="PIRSF000862">
    <property type="entry name" value="Steryl_ester_lip"/>
    <property type="match status" value="1"/>
</dbReference>
<dbReference type="SUPFAM" id="SSF53474">
    <property type="entry name" value="alpha/beta-Hydrolases"/>
    <property type="match status" value="1"/>
</dbReference>
<gene>
    <name type="ORF">SPBC16A3.12c</name>
</gene>
<feature type="chain" id="PRO_0000312660" description="Probable lipase C16A3.12c">
    <location>
        <begin position="1"/>
        <end position="443"/>
    </location>
</feature>
<feature type="topological domain" description="Cytoplasmic" evidence="3">
    <location>
        <begin position="1"/>
        <end position="16"/>
    </location>
</feature>
<feature type="transmembrane region" description="Helical; Signal-anchor for type II membrane protein" evidence="3">
    <location>
        <begin position="17"/>
        <end position="37"/>
    </location>
</feature>
<feature type="topological domain" description="Lumenal" evidence="3">
    <location>
        <begin position="38"/>
        <end position="443"/>
    </location>
</feature>
<feature type="domain" description="AB hydrolase-1" evidence="3">
    <location>
        <begin position="116"/>
        <end position="410"/>
    </location>
</feature>
<feature type="active site" description="Nucleophile" evidence="1">
    <location>
        <position position="210"/>
    </location>
</feature>
<feature type="active site" description="Charge relay system" evidence="2">
    <location>
        <position position="378"/>
    </location>
</feature>
<feature type="active site" description="Charge relay system" evidence="2">
    <location>
        <position position="404"/>
    </location>
</feature>
<feature type="glycosylation site" description="N-linked (GlcNAc...) asparagine" evidence="3">
    <location>
        <position position="134"/>
    </location>
</feature>
<feature type="glycosylation site" description="N-linked (GlcNAc...) asparagine" evidence="3">
    <location>
        <position position="177"/>
    </location>
</feature>
<feature type="glycosylation site" description="N-linked (GlcNAc...) asparagine" evidence="3">
    <location>
        <position position="304"/>
    </location>
</feature>
<feature type="glycosylation site" description="N-linked (GlcNAc...) asparagine" evidence="3">
    <location>
        <position position="335"/>
    </location>
</feature>
<sequence>MSGFNKNQIYWGDYVGVIAAFVGVYTELVARIFIYMIPERVREWFRVRIIVLYHYYISSKTTDGMTDAVQKCRNIYEICEAFGYRVEEHLVRTQDNFILCLHRITHPKQSQHKREVVYCHHGLMTNSELWVAVNESERSLPFVLIESGYDVWLGNNRGNKYSRKHITYKPKDEEFWNFSLDDMAMFDIPDTVDYILRETGREKLNYIGFSQGTAQAMAALSINPDLNDKVNIFIGLAPAYAPKGFSNYFVDYIVKVNPKIMYHLFGRRCLLPSVTFWQNICYPPIFVKIVDVSLKILFNWDLSNISLNQKLCGYAHLYSFSSVKSVVHWLQIIKNCTFQLYDDDMALLAGYGSRHYQVPLFPTNNIKCPMLILWGGKDTLINMEVMRTALPPHAKEVSIAHYEHLDFLWGQDVKEEVFPVVIDALKHHSLGKAKHFVKQNGFH</sequence>
<keyword id="KW-0963">Cytoplasm</keyword>
<keyword id="KW-0325">Glycoprotein</keyword>
<keyword id="KW-0378">Hydrolase</keyword>
<keyword id="KW-0442">Lipid degradation</keyword>
<keyword id="KW-0443">Lipid metabolism</keyword>
<keyword id="KW-0472">Membrane</keyword>
<keyword id="KW-1185">Reference proteome</keyword>
<keyword id="KW-0735">Signal-anchor</keyword>
<keyword id="KW-0812">Transmembrane</keyword>
<keyword id="KW-1133">Transmembrane helix</keyword>
<keyword id="KW-0926">Vacuole</keyword>
<accession>P78898</accession>
<organism>
    <name type="scientific">Schizosaccharomyces pombe (strain 972 / ATCC 24843)</name>
    <name type="common">Fission yeast</name>
    <dbReference type="NCBI Taxonomy" id="284812"/>
    <lineage>
        <taxon>Eukaryota</taxon>
        <taxon>Fungi</taxon>
        <taxon>Dikarya</taxon>
        <taxon>Ascomycota</taxon>
        <taxon>Taphrinomycotina</taxon>
        <taxon>Schizosaccharomycetes</taxon>
        <taxon>Schizosaccharomycetales</taxon>
        <taxon>Schizosaccharomycetaceae</taxon>
        <taxon>Schizosaccharomyces</taxon>
    </lineage>
</organism>
<reference evidence="6" key="1">
    <citation type="journal article" date="2002" name="Nature">
        <title>The genome sequence of Schizosaccharomyces pombe.</title>
        <authorList>
            <person name="Wood V."/>
            <person name="Gwilliam R."/>
            <person name="Rajandream M.A."/>
            <person name="Lyne M.H."/>
            <person name="Lyne R."/>
            <person name="Stewart A."/>
            <person name="Sgouros J.G."/>
            <person name="Peat N."/>
            <person name="Hayles J."/>
            <person name="Baker S.G."/>
            <person name="Basham D."/>
            <person name="Bowman S."/>
            <person name="Brooks K."/>
            <person name="Brown D."/>
            <person name="Brown S."/>
            <person name="Chillingworth T."/>
            <person name="Churcher C.M."/>
            <person name="Collins M."/>
            <person name="Connor R."/>
            <person name="Cronin A."/>
            <person name="Davis P."/>
            <person name="Feltwell T."/>
            <person name="Fraser A."/>
            <person name="Gentles S."/>
            <person name="Goble A."/>
            <person name="Hamlin N."/>
            <person name="Harris D.E."/>
            <person name="Hidalgo J."/>
            <person name="Hodgson G."/>
            <person name="Holroyd S."/>
            <person name="Hornsby T."/>
            <person name="Howarth S."/>
            <person name="Huckle E.J."/>
            <person name="Hunt S."/>
            <person name="Jagels K."/>
            <person name="James K.D."/>
            <person name="Jones L."/>
            <person name="Jones M."/>
            <person name="Leather S."/>
            <person name="McDonald S."/>
            <person name="McLean J."/>
            <person name="Mooney P."/>
            <person name="Moule S."/>
            <person name="Mungall K.L."/>
            <person name="Murphy L.D."/>
            <person name="Niblett D."/>
            <person name="Odell C."/>
            <person name="Oliver K."/>
            <person name="O'Neil S."/>
            <person name="Pearson D."/>
            <person name="Quail M.A."/>
            <person name="Rabbinowitsch E."/>
            <person name="Rutherford K.M."/>
            <person name="Rutter S."/>
            <person name="Saunders D."/>
            <person name="Seeger K."/>
            <person name="Sharp S."/>
            <person name="Skelton J."/>
            <person name="Simmonds M.N."/>
            <person name="Squares R."/>
            <person name="Squares S."/>
            <person name="Stevens K."/>
            <person name="Taylor K."/>
            <person name="Taylor R.G."/>
            <person name="Tivey A."/>
            <person name="Walsh S.V."/>
            <person name="Warren T."/>
            <person name="Whitehead S."/>
            <person name="Woodward J.R."/>
            <person name="Volckaert G."/>
            <person name="Aert R."/>
            <person name="Robben J."/>
            <person name="Grymonprez B."/>
            <person name="Weltjens I."/>
            <person name="Vanstreels E."/>
            <person name="Rieger M."/>
            <person name="Schaefer M."/>
            <person name="Mueller-Auer S."/>
            <person name="Gabel C."/>
            <person name="Fuchs M."/>
            <person name="Duesterhoeft A."/>
            <person name="Fritzc C."/>
            <person name="Holzer E."/>
            <person name="Moestl D."/>
            <person name="Hilbert H."/>
            <person name="Borzym K."/>
            <person name="Langer I."/>
            <person name="Beck A."/>
            <person name="Lehrach H."/>
            <person name="Reinhardt R."/>
            <person name="Pohl T.M."/>
            <person name="Eger P."/>
            <person name="Zimmermann W."/>
            <person name="Wedler H."/>
            <person name="Wambutt R."/>
            <person name="Purnelle B."/>
            <person name="Goffeau A."/>
            <person name="Cadieu E."/>
            <person name="Dreano S."/>
            <person name="Gloux S."/>
            <person name="Lelaure V."/>
            <person name="Mottier S."/>
            <person name="Galibert F."/>
            <person name="Aves S.J."/>
            <person name="Xiang Z."/>
            <person name="Hunt C."/>
            <person name="Moore K."/>
            <person name="Hurst S.M."/>
            <person name="Lucas M."/>
            <person name="Rochet M."/>
            <person name="Gaillardin C."/>
            <person name="Tallada V.A."/>
            <person name="Garzon A."/>
            <person name="Thode G."/>
            <person name="Daga R.R."/>
            <person name="Cruzado L."/>
            <person name="Jimenez J."/>
            <person name="Sanchez M."/>
            <person name="del Rey F."/>
            <person name="Benito J."/>
            <person name="Dominguez A."/>
            <person name="Revuelta J.L."/>
            <person name="Moreno S."/>
            <person name="Armstrong J."/>
            <person name="Forsburg S.L."/>
            <person name="Cerutti L."/>
            <person name="Lowe T."/>
            <person name="McCombie W.R."/>
            <person name="Paulsen I."/>
            <person name="Potashkin J."/>
            <person name="Shpakovski G.V."/>
            <person name="Ussery D."/>
            <person name="Barrell B.G."/>
            <person name="Nurse P."/>
        </authorList>
    </citation>
    <scope>NUCLEOTIDE SEQUENCE [LARGE SCALE GENOMIC DNA]</scope>
    <source>
        <strain>972 / ATCC 24843</strain>
    </source>
</reference>
<reference evidence="5" key="2">
    <citation type="journal article" date="2006" name="Nat. Biotechnol.">
        <title>ORFeome cloning and global analysis of protein localization in the fission yeast Schizosaccharomyces pombe.</title>
        <authorList>
            <person name="Matsuyama A."/>
            <person name="Arai R."/>
            <person name="Yashiroda Y."/>
            <person name="Shirai A."/>
            <person name="Kamata A."/>
            <person name="Sekido S."/>
            <person name="Kobayashi Y."/>
            <person name="Hashimoto A."/>
            <person name="Hamamoto M."/>
            <person name="Hiraoka Y."/>
            <person name="Horinouchi S."/>
            <person name="Yoshida M."/>
        </authorList>
    </citation>
    <scope>SUBCELLULAR LOCATION [LARGE SCALE ANALYSIS]</scope>
</reference>
<protein>
    <recommendedName>
        <fullName>Probable lipase C16A3.12c</fullName>
        <ecNumber>3.1.1.-</ecNumber>
    </recommendedName>
</protein>